<evidence type="ECO:0000255" key="1">
    <source>
        <dbReference type="HAMAP-Rule" id="MF_00105"/>
    </source>
</evidence>
<name>GREA_XANAC</name>
<feature type="chain" id="PRO_0000176997" description="Transcription elongation factor GreA">
    <location>
        <begin position="1"/>
        <end position="158"/>
    </location>
</feature>
<feature type="coiled-coil region" evidence="1">
    <location>
        <begin position="45"/>
        <end position="73"/>
    </location>
</feature>
<protein>
    <recommendedName>
        <fullName evidence="1">Transcription elongation factor GreA</fullName>
    </recommendedName>
    <alternativeName>
        <fullName evidence="1">Transcript cleavage factor GreA</fullName>
    </alternativeName>
</protein>
<organism>
    <name type="scientific">Xanthomonas axonopodis pv. citri (strain 306)</name>
    <dbReference type="NCBI Taxonomy" id="190486"/>
    <lineage>
        <taxon>Bacteria</taxon>
        <taxon>Pseudomonadati</taxon>
        <taxon>Pseudomonadota</taxon>
        <taxon>Gammaproteobacteria</taxon>
        <taxon>Lysobacterales</taxon>
        <taxon>Lysobacteraceae</taxon>
        <taxon>Xanthomonas</taxon>
    </lineage>
</organism>
<dbReference type="EMBL" id="AE008923">
    <property type="protein sequence ID" value="AAM36725.1"/>
    <property type="molecule type" value="Genomic_DNA"/>
</dbReference>
<dbReference type="SMR" id="Q8PLD9"/>
<dbReference type="KEGG" id="xac:XAC1863"/>
<dbReference type="eggNOG" id="COG0782">
    <property type="taxonomic scope" value="Bacteria"/>
</dbReference>
<dbReference type="HOGENOM" id="CLU_101379_2_0_6"/>
<dbReference type="Proteomes" id="UP000000576">
    <property type="component" value="Chromosome"/>
</dbReference>
<dbReference type="GO" id="GO:0003677">
    <property type="term" value="F:DNA binding"/>
    <property type="evidence" value="ECO:0007669"/>
    <property type="project" value="UniProtKB-UniRule"/>
</dbReference>
<dbReference type="GO" id="GO:0070063">
    <property type="term" value="F:RNA polymerase binding"/>
    <property type="evidence" value="ECO:0007669"/>
    <property type="project" value="InterPro"/>
</dbReference>
<dbReference type="GO" id="GO:0006354">
    <property type="term" value="P:DNA-templated transcription elongation"/>
    <property type="evidence" value="ECO:0007669"/>
    <property type="project" value="TreeGrafter"/>
</dbReference>
<dbReference type="GO" id="GO:0032784">
    <property type="term" value="P:regulation of DNA-templated transcription elongation"/>
    <property type="evidence" value="ECO:0007669"/>
    <property type="project" value="UniProtKB-UniRule"/>
</dbReference>
<dbReference type="FunFam" id="1.10.287.180:FF:000001">
    <property type="entry name" value="Transcription elongation factor GreA"/>
    <property type="match status" value="1"/>
</dbReference>
<dbReference type="FunFam" id="3.10.50.30:FF:000001">
    <property type="entry name" value="Transcription elongation factor GreA"/>
    <property type="match status" value="1"/>
</dbReference>
<dbReference type="Gene3D" id="3.10.50.30">
    <property type="entry name" value="Transcription elongation factor, GreA/GreB, C-terminal domain"/>
    <property type="match status" value="1"/>
</dbReference>
<dbReference type="Gene3D" id="1.10.287.180">
    <property type="entry name" value="Transcription elongation factor, GreA/GreB, N-terminal domain"/>
    <property type="match status" value="1"/>
</dbReference>
<dbReference type="HAMAP" id="MF_00105">
    <property type="entry name" value="GreA_GreB"/>
    <property type="match status" value="1"/>
</dbReference>
<dbReference type="InterPro" id="IPR036953">
    <property type="entry name" value="GreA/GreB_C_sf"/>
</dbReference>
<dbReference type="InterPro" id="IPR018151">
    <property type="entry name" value="TF_GreA/GreB_CS"/>
</dbReference>
<dbReference type="InterPro" id="IPR006359">
    <property type="entry name" value="Tscrpt_elong_fac_GreA"/>
</dbReference>
<dbReference type="InterPro" id="IPR028624">
    <property type="entry name" value="Tscrpt_elong_fac_GreA/B"/>
</dbReference>
<dbReference type="InterPro" id="IPR001437">
    <property type="entry name" value="Tscrpt_elong_fac_GreA/B_C"/>
</dbReference>
<dbReference type="InterPro" id="IPR023459">
    <property type="entry name" value="Tscrpt_elong_fac_GreA/B_fam"/>
</dbReference>
<dbReference type="InterPro" id="IPR022691">
    <property type="entry name" value="Tscrpt_elong_fac_GreA/B_N"/>
</dbReference>
<dbReference type="InterPro" id="IPR036805">
    <property type="entry name" value="Tscrpt_elong_fac_GreA/B_N_sf"/>
</dbReference>
<dbReference type="NCBIfam" id="TIGR01462">
    <property type="entry name" value="greA"/>
    <property type="match status" value="1"/>
</dbReference>
<dbReference type="NCBIfam" id="NF001261">
    <property type="entry name" value="PRK00226.1-2"/>
    <property type="match status" value="1"/>
</dbReference>
<dbReference type="NCBIfam" id="NF001263">
    <property type="entry name" value="PRK00226.1-4"/>
    <property type="match status" value="1"/>
</dbReference>
<dbReference type="NCBIfam" id="NF001264">
    <property type="entry name" value="PRK00226.1-5"/>
    <property type="match status" value="1"/>
</dbReference>
<dbReference type="PANTHER" id="PTHR30437">
    <property type="entry name" value="TRANSCRIPTION ELONGATION FACTOR GREA"/>
    <property type="match status" value="1"/>
</dbReference>
<dbReference type="PANTHER" id="PTHR30437:SF4">
    <property type="entry name" value="TRANSCRIPTION ELONGATION FACTOR GREA"/>
    <property type="match status" value="1"/>
</dbReference>
<dbReference type="Pfam" id="PF01272">
    <property type="entry name" value="GreA_GreB"/>
    <property type="match status" value="1"/>
</dbReference>
<dbReference type="Pfam" id="PF03449">
    <property type="entry name" value="GreA_GreB_N"/>
    <property type="match status" value="1"/>
</dbReference>
<dbReference type="PIRSF" id="PIRSF006092">
    <property type="entry name" value="GreA_GreB"/>
    <property type="match status" value="1"/>
</dbReference>
<dbReference type="SUPFAM" id="SSF54534">
    <property type="entry name" value="FKBP-like"/>
    <property type="match status" value="1"/>
</dbReference>
<dbReference type="SUPFAM" id="SSF46557">
    <property type="entry name" value="GreA transcript cleavage protein, N-terminal domain"/>
    <property type="match status" value="1"/>
</dbReference>
<dbReference type="PROSITE" id="PS00829">
    <property type="entry name" value="GREAB_1"/>
    <property type="match status" value="1"/>
</dbReference>
<comment type="function">
    <text evidence="1">Necessary for efficient RNA polymerase transcription elongation past template-encoded arresting sites. The arresting sites in DNA have the property of trapping a certain fraction of elongating RNA polymerases that pass through, resulting in locked ternary complexes. Cleavage of the nascent transcript by cleavage factors such as GreA or GreB allows the resumption of elongation from the new 3'terminus. GreA releases sequences of 2 to 3 nucleotides.</text>
</comment>
<comment type="similarity">
    <text evidence="1">Belongs to the GreA/GreB family.</text>
</comment>
<reference key="1">
    <citation type="journal article" date="2002" name="Nature">
        <title>Comparison of the genomes of two Xanthomonas pathogens with differing host specificities.</title>
        <authorList>
            <person name="da Silva A.C.R."/>
            <person name="Ferro J.A."/>
            <person name="Reinach F.C."/>
            <person name="Farah C.S."/>
            <person name="Furlan L.R."/>
            <person name="Quaggio R.B."/>
            <person name="Monteiro-Vitorello C.B."/>
            <person name="Van Sluys M.A."/>
            <person name="Almeida N.F. Jr."/>
            <person name="Alves L.M.C."/>
            <person name="do Amaral A.M."/>
            <person name="Bertolini M.C."/>
            <person name="Camargo L.E.A."/>
            <person name="Camarotte G."/>
            <person name="Cannavan F."/>
            <person name="Cardozo J."/>
            <person name="Chambergo F."/>
            <person name="Ciapina L.P."/>
            <person name="Cicarelli R.M.B."/>
            <person name="Coutinho L.L."/>
            <person name="Cursino-Santos J.R."/>
            <person name="El-Dorry H."/>
            <person name="Faria J.B."/>
            <person name="Ferreira A.J.S."/>
            <person name="Ferreira R.C.C."/>
            <person name="Ferro M.I.T."/>
            <person name="Formighieri E.F."/>
            <person name="Franco M.C."/>
            <person name="Greggio C.C."/>
            <person name="Gruber A."/>
            <person name="Katsuyama A.M."/>
            <person name="Kishi L.T."/>
            <person name="Leite R.P."/>
            <person name="Lemos E.G.M."/>
            <person name="Lemos M.V.F."/>
            <person name="Locali E.C."/>
            <person name="Machado M.A."/>
            <person name="Madeira A.M.B.N."/>
            <person name="Martinez-Rossi N.M."/>
            <person name="Martins E.C."/>
            <person name="Meidanis J."/>
            <person name="Menck C.F.M."/>
            <person name="Miyaki C.Y."/>
            <person name="Moon D.H."/>
            <person name="Moreira L.M."/>
            <person name="Novo M.T.M."/>
            <person name="Okura V.K."/>
            <person name="Oliveira M.C."/>
            <person name="Oliveira V.R."/>
            <person name="Pereira H.A."/>
            <person name="Rossi A."/>
            <person name="Sena J.A.D."/>
            <person name="Silva C."/>
            <person name="de Souza R.F."/>
            <person name="Spinola L.A.F."/>
            <person name="Takita M.A."/>
            <person name="Tamura R.E."/>
            <person name="Teixeira E.C."/>
            <person name="Tezza R.I.D."/>
            <person name="Trindade dos Santos M."/>
            <person name="Truffi D."/>
            <person name="Tsai S.M."/>
            <person name="White F.F."/>
            <person name="Setubal J.C."/>
            <person name="Kitajima J.P."/>
        </authorList>
    </citation>
    <scope>NUCLEOTIDE SEQUENCE [LARGE SCALE GENOMIC DNA]</scope>
    <source>
        <strain>306</strain>
    </source>
</reference>
<sequence>MRAPMTSKGAQRLREELEHLKSVKRPEVINAIAEARAHGDLKENAEYHAAREQQSFIEGRIKQLESELSHAEIIDITKLSAGTKIVFGATVTLADTETDEEKRYQIVGDLEADIKMGLIAISSPLARALIGKLEGDSVTIDAPAGQREYEVVSVAYLD</sequence>
<accession>Q8PLD9</accession>
<gene>
    <name evidence="1" type="primary">greA</name>
    <name type="ordered locus">XAC1863</name>
</gene>
<keyword id="KW-0175">Coiled coil</keyword>
<keyword id="KW-0238">DNA-binding</keyword>
<keyword id="KW-0804">Transcription</keyword>
<keyword id="KW-0805">Transcription regulation</keyword>
<proteinExistence type="inferred from homology"/>